<protein>
    <recommendedName>
        <fullName>(S)-2-hydroxypropylphosphonic acid epoxidase</fullName>
        <ecNumber evidence="3">1.11.1.23</ecNumber>
    </recommendedName>
    <alternativeName>
        <fullName>Fosfomycin biosynthesis protein 4</fullName>
    </alternativeName>
    <alternativeName>
        <fullName>Hydroxypropylphosphonate epoxidase</fullName>
        <shortName>Sw-hppE</shortName>
    </alternativeName>
</protein>
<comment type="function">
    <text evidence="3 4">Non-heme-dependent dioxygenase that catalyzes the oxidative epoxidation of (S)-2-hydroxypropylphosphonate into (1R,2S)-epoxypropylphosphonate, the final step in the biosynthesis of fosfomycin antibiotic.</text>
</comment>
<comment type="catalytic activity">
    <reaction evidence="3">
        <text>(S)-2-hydroxypropylphosphonate + H2O2 = (1R,2S)-epoxypropylphosphonate + 2 H2O</text>
        <dbReference type="Rhea" id="RHEA:10808"/>
        <dbReference type="ChEBI" id="CHEBI:15377"/>
        <dbReference type="ChEBI" id="CHEBI:16240"/>
        <dbReference type="ChEBI" id="CHEBI:62246"/>
        <dbReference type="ChEBI" id="CHEBI:62247"/>
        <dbReference type="EC" id="1.11.1.23"/>
    </reaction>
</comment>
<comment type="cofactor">
    <cofactor evidence="3">
        <name>Fe(2+)</name>
        <dbReference type="ChEBI" id="CHEBI:29033"/>
    </cofactor>
    <text evidence="3">Binds 1 Fe(2+) ion per subunit.</text>
</comment>
<comment type="pathway">
    <text evidence="3 5">Antibiotic biosynthesis; fosfomycin biosynthesis.</text>
</comment>
<comment type="subunit">
    <text evidence="3 4 6">Homotetramer.</text>
</comment>
<comment type="miscellaneous">
    <text evidence="8">Phosphinothricin tripeptide (PTT) herbicide and fosfomycin antibiotic biosynthesis pathways share early steps starting with phosphoenolpyruvate before the pathways diverge after formation of 2-hydroxyethylphosphonate (HEP). HppE is involved in fosfomycin biosynthesis after divergence of the 2 pathways.</text>
</comment>
<comment type="similarity">
    <text evidence="7">Belongs to the non-heme iron-dependent dioxygenase family.</text>
</comment>
<keyword id="KW-0002">3D-structure</keyword>
<keyword id="KW-0045">Antibiotic biosynthesis</keyword>
<keyword id="KW-0223">Dioxygenase</keyword>
<keyword id="KW-0238">DNA-binding</keyword>
<keyword id="KW-0408">Iron</keyword>
<keyword id="KW-0479">Metal-binding</keyword>
<keyword id="KW-0520">NAD</keyword>
<keyword id="KW-0560">Oxidoreductase</keyword>
<name>HPPE_STRWE</name>
<dbReference type="EC" id="1.11.1.23" evidence="3"/>
<dbReference type="EMBL" id="AB016934">
    <property type="protein sequence ID" value="BAA32491.1"/>
    <property type="molecule type" value="Genomic_DNA"/>
</dbReference>
<dbReference type="PIR" id="S60215">
    <property type="entry name" value="S60215"/>
</dbReference>
<dbReference type="RefSeq" id="WP_033205181.1">
    <property type="nucleotide sequence ID" value="NZ_JNWK01000026.1"/>
</dbReference>
<dbReference type="PDB" id="1ZZ6">
    <property type="method" value="X-ray"/>
    <property type="resolution" value="2.00 A"/>
    <property type="chains" value="A/B=1-198"/>
</dbReference>
<dbReference type="PDB" id="1ZZ7">
    <property type="method" value="X-ray"/>
    <property type="resolution" value="2.10 A"/>
    <property type="chains" value="A/B=1-198"/>
</dbReference>
<dbReference type="PDB" id="1ZZ8">
    <property type="method" value="X-ray"/>
    <property type="resolution" value="2.30 A"/>
    <property type="chains" value="A/B/C=1-198"/>
</dbReference>
<dbReference type="PDB" id="1ZZ9">
    <property type="method" value="X-ray"/>
    <property type="resolution" value="2.40 A"/>
    <property type="chains" value="A/B/C=1-198"/>
</dbReference>
<dbReference type="PDB" id="1ZZB">
    <property type="method" value="X-ray"/>
    <property type="resolution" value="2.30 A"/>
    <property type="chains" value="A/B=1-198"/>
</dbReference>
<dbReference type="PDB" id="1ZZC">
    <property type="method" value="X-ray"/>
    <property type="resolution" value="1.80 A"/>
    <property type="chains" value="A/B=1-198"/>
</dbReference>
<dbReference type="PDB" id="2BNM">
    <property type="method" value="X-ray"/>
    <property type="resolution" value="1.70 A"/>
    <property type="chains" value="A/B=1-198"/>
</dbReference>
<dbReference type="PDB" id="2BNN">
    <property type="method" value="X-ray"/>
    <property type="resolution" value="2.50 A"/>
    <property type="chains" value="A/B=1-198"/>
</dbReference>
<dbReference type="PDB" id="2BNO">
    <property type="method" value="X-ray"/>
    <property type="resolution" value="1.90 A"/>
    <property type="chains" value="A/B=1-198"/>
</dbReference>
<dbReference type="PDB" id="3SCF">
    <property type="method" value="X-ray"/>
    <property type="resolution" value="2.85 A"/>
    <property type="chains" value="A/B/C=1-198"/>
</dbReference>
<dbReference type="PDB" id="3SCG">
    <property type="method" value="X-ray"/>
    <property type="resolution" value="3.00 A"/>
    <property type="chains" value="A/B/C=1-198"/>
</dbReference>
<dbReference type="PDB" id="3SCH">
    <property type="method" value="X-ray"/>
    <property type="resolution" value="2.10 A"/>
    <property type="chains" value="A/B=1-198"/>
</dbReference>
<dbReference type="PDB" id="4J1W">
    <property type="method" value="X-ray"/>
    <property type="resolution" value="2.72 A"/>
    <property type="chains" value="A/B/C=1-198"/>
</dbReference>
<dbReference type="PDB" id="4J1X">
    <property type="method" value="X-ray"/>
    <property type="resolution" value="2.80 A"/>
    <property type="chains" value="A/B/C=2-198"/>
</dbReference>
<dbReference type="PDBsum" id="1ZZ6"/>
<dbReference type="PDBsum" id="1ZZ7"/>
<dbReference type="PDBsum" id="1ZZ8"/>
<dbReference type="PDBsum" id="1ZZ9"/>
<dbReference type="PDBsum" id="1ZZB"/>
<dbReference type="PDBsum" id="1ZZC"/>
<dbReference type="PDBsum" id="2BNM"/>
<dbReference type="PDBsum" id="2BNN"/>
<dbReference type="PDBsum" id="2BNO"/>
<dbReference type="PDBsum" id="3SCF"/>
<dbReference type="PDBsum" id="3SCG"/>
<dbReference type="PDBsum" id="3SCH"/>
<dbReference type="PDBsum" id="4J1W"/>
<dbReference type="PDBsum" id="4J1X"/>
<dbReference type="SMR" id="Q56185"/>
<dbReference type="KEGG" id="ag:BAA32491"/>
<dbReference type="BioCyc" id="MetaCyc:MONOMER-13661"/>
<dbReference type="BRENDA" id="1.11.1.23">
    <property type="organism ID" value="6118"/>
</dbReference>
<dbReference type="BRENDA" id="1.14.19.7">
    <property type="organism ID" value="6118"/>
</dbReference>
<dbReference type="UniPathway" id="UPA01071"/>
<dbReference type="EvolutionaryTrace" id="Q56185"/>
<dbReference type="GO" id="GO:0005829">
    <property type="term" value="C:cytosol"/>
    <property type="evidence" value="ECO:0007669"/>
    <property type="project" value="TreeGrafter"/>
</dbReference>
<dbReference type="GO" id="GO:0051213">
    <property type="term" value="F:dioxygenase activity"/>
    <property type="evidence" value="ECO:0007669"/>
    <property type="project" value="UniProtKB-KW"/>
</dbReference>
<dbReference type="GO" id="GO:0003677">
    <property type="term" value="F:DNA binding"/>
    <property type="evidence" value="ECO:0007669"/>
    <property type="project" value="UniProtKB-KW"/>
</dbReference>
<dbReference type="GO" id="GO:0003700">
    <property type="term" value="F:DNA-binding transcription factor activity"/>
    <property type="evidence" value="ECO:0007669"/>
    <property type="project" value="TreeGrafter"/>
</dbReference>
<dbReference type="GO" id="GO:0008198">
    <property type="term" value="F:ferrous iron binding"/>
    <property type="evidence" value="ECO:0000314"/>
    <property type="project" value="UniProtKB"/>
</dbReference>
<dbReference type="GO" id="GO:0016717">
    <property type="term" value="F:oxidoreductase activity, acting on paired donors, with oxidation of a pair of donors resulting in the reduction of molecular oxygen to two molecules of water"/>
    <property type="evidence" value="ECO:0000314"/>
    <property type="project" value="UniProtKB"/>
</dbReference>
<dbReference type="GO" id="GO:0017000">
    <property type="term" value="P:antibiotic biosynthetic process"/>
    <property type="evidence" value="ECO:0007669"/>
    <property type="project" value="UniProtKB-KW"/>
</dbReference>
<dbReference type="GO" id="GO:1901766">
    <property type="term" value="P:phosphinothricin biosynthetic process"/>
    <property type="evidence" value="ECO:0000314"/>
    <property type="project" value="UniProtKB"/>
</dbReference>
<dbReference type="GO" id="GO:0051289">
    <property type="term" value="P:protein homotetramerization"/>
    <property type="evidence" value="ECO:0000314"/>
    <property type="project" value="UniProtKB"/>
</dbReference>
<dbReference type="CDD" id="cd20489">
    <property type="entry name" value="cupin_HppE-like_C"/>
    <property type="match status" value="1"/>
</dbReference>
<dbReference type="CDD" id="cd00093">
    <property type="entry name" value="HTH_XRE"/>
    <property type="match status" value="1"/>
</dbReference>
<dbReference type="FunFam" id="2.60.120.10:FF:000382">
    <property type="entry name" value="(S)-2-hydroxypropylphosphonic acid epoxidase"/>
    <property type="match status" value="1"/>
</dbReference>
<dbReference type="Gene3D" id="2.60.120.10">
    <property type="entry name" value="Jelly Rolls"/>
    <property type="match status" value="1"/>
</dbReference>
<dbReference type="Gene3D" id="1.10.260.40">
    <property type="entry name" value="lambda repressor-like DNA-binding domains"/>
    <property type="match status" value="1"/>
</dbReference>
<dbReference type="InterPro" id="IPR050807">
    <property type="entry name" value="Bact_TransReg_Diox"/>
</dbReference>
<dbReference type="InterPro" id="IPR001387">
    <property type="entry name" value="Cro/C1-type_HTH"/>
</dbReference>
<dbReference type="InterPro" id="IPR013096">
    <property type="entry name" value="Cupin_2"/>
</dbReference>
<dbReference type="InterPro" id="IPR010982">
    <property type="entry name" value="Lambda_DNA-bd_dom_sf"/>
</dbReference>
<dbReference type="InterPro" id="IPR014710">
    <property type="entry name" value="RmlC-like_jellyroll"/>
</dbReference>
<dbReference type="InterPro" id="IPR011051">
    <property type="entry name" value="RmlC_Cupin_sf"/>
</dbReference>
<dbReference type="PANTHER" id="PTHR46797">
    <property type="entry name" value="HTH-TYPE TRANSCRIPTIONAL REGULATOR"/>
    <property type="match status" value="1"/>
</dbReference>
<dbReference type="PANTHER" id="PTHR46797:SF1">
    <property type="entry name" value="METHYLPHOSPHONATE SYNTHASE"/>
    <property type="match status" value="1"/>
</dbReference>
<dbReference type="Pfam" id="PF07883">
    <property type="entry name" value="Cupin_2"/>
    <property type="match status" value="1"/>
</dbReference>
<dbReference type="Pfam" id="PF01381">
    <property type="entry name" value="HTH_3"/>
    <property type="match status" value="1"/>
</dbReference>
<dbReference type="SMART" id="SM00530">
    <property type="entry name" value="HTH_XRE"/>
    <property type="match status" value="1"/>
</dbReference>
<dbReference type="SUPFAM" id="SSF47413">
    <property type="entry name" value="lambda repressor-like DNA-binding domains"/>
    <property type="match status" value="1"/>
</dbReference>
<dbReference type="SUPFAM" id="SSF51182">
    <property type="entry name" value="RmlC-like cupins"/>
    <property type="match status" value="1"/>
</dbReference>
<dbReference type="PROSITE" id="PS50943">
    <property type="entry name" value="HTH_CROC1"/>
    <property type="match status" value="1"/>
</dbReference>
<feature type="chain" id="PRO_0000422030" description="(S)-2-hydroxypropylphosphonic acid epoxidase">
    <location>
        <begin position="1"/>
        <end position="198"/>
    </location>
</feature>
<feature type="domain" description="HTH cro/C1-type" evidence="2">
    <location>
        <begin position="15"/>
        <end position="70"/>
    </location>
</feature>
<feature type="domain" description="Cupin type-2" evidence="1">
    <location>
        <begin position="136"/>
        <end position="196"/>
    </location>
</feature>
<feature type="DNA-binding region" description="H-T-H motif" evidence="2">
    <location>
        <begin position="26"/>
        <end position="45"/>
    </location>
</feature>
<feature type="binding site" evidence="4 6 16 20 21 22">
    <location>
        <position position="23"/>
    </location>
    <ligand>
        <name>substrate</name>
    </ligand>
</feature>
<feature type="binding site" evidence="3 4 6 11 16 19 20 21 22">
    <location>
        <position position="97"/>
    </location>
    <ligand>
        <name>substrate</name>
    </ligand>
</feature>
<feature type="binding site" evidence="3 4 6 11 13 16 18 19 20 21 22">
    <location>
        <position position="105"/>
    </location>
    <ligand>
        <name>substrate</name>
    </ligand>
</feature>
<feature type="binding site" evidence="3 4 6 10 11 13 16 18 19 20 21 22">
    <location>
        <begin position="135"/>
        <end position="138"/>
    </location>
    <ligand>
        <name>substrate</name>
    </ligand>
</feature>
<feature type="binding site" evidence="3 4 6 10 11 12 15 16 17 18 19 21 22">
    <location>
        <position position="138"/>
    </location>
    <ligand>
        <name>Fe cation</name>
        <dbReference type="ChEBI" id="CHEBI:24875"/>
    </ligand>
</feature>
<feature type="binding site" evidence="3 4 6 10 11 12 15 16 17 18 19 21 22">
    <location>
        <position position="142"/>
    </location>
    <ligand>
        <name>Fe cation</name>
        <dbReference type="ChEBI" id="CHEBI:24875"/>
    </ligand>
</feature>
<feature type="binding site" evidence="3 4 6 10 11 13 16 18 19 20 21">
    <location>
        <position position="142"/>
    </location>
    <ligand>
        <name>substrate</name>
    </ligand>
</feature>
<feature type="binding site" evidence="3 4 6 10 11 12 15 16 17 18 19 21 22">
    <location>
        <position position="180"/>
    </location>
    <ligand>
        <name>Fe cation</name>
        <dbReference type="ChEBI" id="CHEBI:24875"/>
    </ligand>
</feature>
<feature type="mutagenesis site" description="Abolishes (S)-2-hydroxypropylphosphonic acid epoxidase activity." evidence="3">
    <original>K</original>
    <variation>A</variation>
    <location>
        <position position="23"/>
    </location>
</feature>
<feature type="mutagenesis site" description="Abolishes (S)-2-hydroxypropylphosphonic acid epoxidase activity." evidence="3">
    <original>Y</original>
    <variation>F</variation>
    <location>
        <position position="105"/>
    </location>
</feature>
<feature type="mutagenesis site" description="Abolishes (S)-2-hydroxypropylphosphonic acid epoxidase activity." evidence="3">
    <original>E</original>
    <variation>A</variation>
    <location>
        <position position="142"/>
    </location>
</feature>
<feature type="helix" evidence="24">
    <location>
        <begin position="6"/>
        <end position="21"/>
    </location>
</feature>
<feature type="helix" evidence="24">
    <location>
        <begin position="26"/>
        <end position="33"/>
    </location>
</feature>
<feature type="helix" evidence="24">
    <location>
        <begin position="37"/>
        <end position="44"/>
    </location>
</feature>
<feature type="turn" evidence="24">
    <location>
        <begin position="45"/>
        <end position="47"/>
    </location>
</feature>
<feature type="helix" evidence="24">
    <location>
        <begin position="53"/>
        <end position="62"/>
    </location>
</feature>
<feature type="helix" evidence="24">
    <location>
        <begin position="68"/>
        <end position="70"/>
    </location>
</feature>
<feature type="strand" evidence="23">
    <location>
        <begin position="79"/>
        <end position="81"/>
    </location>
</feature>
<feature type="helix" evidence="24">
    <location>
        <begin position="87"/>
        <end position="89"/>
    </location>
</feature>
<feature type="strand" evidence="25">
    <location>
        <begin position="95"/>
        <end position="97"/>
    </location>
</feature>
<feature type="strand" evidence="24">
    <location>
        <begin position="103"/>
        <end position="107"/>
    </location>
</feature>
<feature type="strand" evidence="24">
    <location>
        <begin position="118"/>
        <end position="124"/>
    </location>
</feature>
<feature type="helix" evidence="24">
    <location>
        <begin position="129"/>
        <end position="131"/>
    </location>
</feature>
<feature type="strand" evidence="24">
    <location>
        <begin position="139"/>
        <end position="149"/>
    </location>
</feature>
<feature type="strand" evidence="24">
    <location>
        <begin position="151"/>
        <end position="156"/>
    </location>
</feature>
<feature type="strand" evidence="24">
    <location>
        <begin position="162"/>
        <end position="166"/>
    </location>
</feature>
<feature type="strand" evidence="24">
    <location>
        <begin position="171"/>
        <end position="174"/>
    </location>
</feature>
<feature type="strand" evidence="24">
    <location>
        <begin position="180"/>
        <end position="185"/>
    </location>
</feature>
<feature type="strand" evidence="24">
    <location>
        <begin position="191"/>
        <end position="198"/>
    </location>
</feature>
<organism>
    <name type="scientific">Streptomyces wedmorensis</name>
    <dbReference type="NCBI Taxonomy" id="43759"/>
    <lineage>
        <taxon>Bacteria</taxon>
        <taxon>Bacillati</taxon>
        <taxon>Actinomycetota</taxon>
        <taxon>Actinomycetes</taxon>
        <taxon>Kitasatosporales</taxon>
        <taxon>Streptomycetaceae</taxon>
        <taxon>Streptomyces</taxon>
    </lineage>
</organism>
<sequence>MSNTKTASTGFAELLKDRREQVKMDHAALASLLGETPETVAAWENGEGGELTLTQLGRIAHVLGTSIGALTPPAGNDLDDGVIIQMPDERPILKGVRDNVDYYVYNCLVRTKRAPSLVPLVVDVLTDNPDDAKFNSGHAGNEFLFVLEGEIHMKWGDKENPKEALLPTGASMFVEEHVPHAFTAAKGTGSAKLIAVNF</sequence>
<reference key="1">
    <citation type="journal article" date="1995" name="Mol. Gen. Genet.">
        <title>Cloning and nucleotide sequence of fosfomycin biosynthetic genes of Streptomyces wedmorensis.</title>
        <authorList>
            <person name="Hidaka T."/>
            <person name="Goda M."/>
            <person name="Kuzuyama T."/>
            <person name="Takei N."/>
            <person name="Hidaka M."/>
            <person name="Seto H."/>
        </authorList>
    </citation>
    <scope>NUCLEOTIDE SEQUENCE [GENOMIC DNA]</scope>
</reference>
<reference key="2">
    <citation type="journal article" date="2009" name="Nature">
        <title>An unusual carbon-carbon bond cleavage reaction during phosphinothricin biosynthesis.</title>
        <authorList>
            <person name="Cicchillo R.M."/>
            <person name="Zhang H."/>
            <person name="Blodgett J.A."/>
            <person name="Whitteck J.T."/>
            <person name="Li G."/>
            <person name="Nair S.K."/>
            <person name="van der Donk W.A."/>
            <person name="Metcalf W.W."/>
        </authorList>
    </citation>
    <scope>PHOSPHINOTHRICIN TRIPEPTIDE AND FOSFOMYCIN BIOSYNTHESIS</scope>
    <scope>PATHWAY</scope>
</reference>
<reference evidence="9 10 11 12 13 14" key="3">
    <citation type="journal article" date="2005" name="Nature">
        <title>Structural insight into antibiotic fosfomycin biosynthesis by a mononuclear iron enzyme.</title>
        <authorList>
            <person name="Higgins L.J."/>
            <person name="Yan F."/>
            <person name="Liu P."/>
            <person name="Liu H.W."/>
            <person name="Drennan C.L."/>
        </authorList>
    </citation>
    <scope>X-RAY CRYSTALLOGRAPHY (1.80 ANGSTROMS) IN COMPLEX WITH COBALT AND (S)-2-HYDROXYPROPYLPHOSPHONATE</scope>
    <scope>FUNCTION</scope>
    <scope>CATALYTIC ACTIVITY</scope>
    <scope>COFACTOR</scope>
    <scope>SUBUNIT</scope>
    <scope>PATHWAY</scope>
    <scope>MUTAGENESIS OF LYS-23; TYR-105 AND GLU-142</scope>
</reference>
<reference evidence="15 16 17" key="4">
    <citation type="journal article" date="2005" name="Proc. Natl. Acad. Sci. U.S.A.">
        <title>Structure and reactivity of hydroxypropylphosphonic acid epoxidase in fosfomycin biosynthesis by a cation- and flavin-dependent mechanism.</title>
        <authorList>
            <person name="McLuskey K."/>
            <person name="Cameron S."/>
            <person name="Hammerschmidt F."/>
            <person name="Hunter W.N."/>
        </authorList>
    </citation>
    <scope>X-RAY CRYSTALLOGRAPHY (1.70 ANGSTROMS) IN COMPLEX WITH ZINC</scope>
    <scope>FUNCTION</scope>
</reference>
<reference evidence="18 19 20" key="5">
    <citation type="journal article" date="2011" name="J. Am. Chem. Soc.">
        <title>Structural basis of regiospecificity of a mononuclear iron enzyme in antibiotic fosfomycin biosynthesis.</title>
        <authorList>
            <person name="Yun D."/>
            <person name="Dey M."/>
            <person name="Higgins L.J."/>
            <person name="Yan F."/>
            <person name="Liu H.W."/>
            <person name="Drennan C.L."/>
        </authorList>
    </citation>
    <scope>X-RAY CRYSTALLOGRAPHY (2.10 ANGSTROMS) IN COMPLEX WITH IRON</scope>
</reference>
<accession>Q56185</accession>
<evidence type="ECO:0000255" key="1"/>
<evidence type="ECO:0000255" key="2">
    <source>
        <dbReference type="PROSITE-ProRule" id="PRU00257"/>
    </source>
</evidence>
<evidence type="ECO:0000269" key="3">
    <source>
    </source>
</evidence>
<evidence type="ECO:0000269" key="4">
    <source>
    </source>
</evidence>
<evidence type="ECO:0000269" key="5">
    <source>
    </source>
</evidence>
<evidence type="ECO:0000269" key="6">
    <source>
    </source>
</evidence>
<evidence type="ECO:0000305" key="7"/>
<evidence type="ECO:0000305" key="8">
    <source>
    </source>
</evidence>
<evidence type="ECO:0007744" key="9">
    <source>
        <dbReference type="PDB" id="1ZZ6"/>
    </source>
</evidence>
<evidence type="ECO:0007744" key="10">
    <source>
        <dbReference type="PDB" id="1ZZ7"/>
    </source>
</evidence>
<evidence type="ECO:0007744" key="11">
    <source>
        <dbReference type="PDB" id="1ZZ8"/>
    </source>
</evidence>
<evidence type="ECO:0007744" key="12">
    <source>
        <dbReference type="PDB" id="1ZZ9"/>
    </source>
</evidence>
<evidence type="ECO:0007744" key="13">
    <source>
        <dbReference type="PDB" id="1ZZB"/>
    </source>
</evidence>
<evidence type="ECO:0007744" key="14">
    <source>
        <dbReference type="PDB" id="1ZZC"/>
    </source>
</evidence>
<evidence type="ECO:0007744" key="15">
    <source>
        <dbReference type="PDB" id="2BNM"/>
    </source>
</evidence>
<evidence type="ECO:0007744" key="16">
    <source>
        <dbReference type="PDB" id="2BNN"/>
    </source>
</evidence>
<evidence type="ECO:0007744" key="17">
    <source>
        <dbReference type="PDB" id="2BNO"/>
    </source>
</evidence>
<evidence type="ECO:0007744" key="18">
    <source>
        <dbReference type="PDB" id="3SCF"/>
    </source>
</evidence>
<evidence type="ECO:0007744" key="19">
    <source>
        <dbReference type="PDB" id="3SCG"/>
    </source>
</evidence>
<evidence type="ECO:0007744" key="20">
    <source>
        <dbReference type="PDB" id="3SCH"/>
    </source>
</evidence>
<evidence type="ECO:0007744" key="21">
    <source>
        <dbReference type="PDB" id="4J1W"/>
    </source>
</evidence>
<evidence type="ECO:0007744" key="22">
    <source>
        <dbReference type="PDB" id="4J1X"/>
    </source>
</evidence>
<evidence type="ECO:0007829" key="23">
    <source>
        <dbReference type="PDB" id="1ZZ8"/>
    </source>
</evidence>
<evidence type="ECO:0007829" key="24">
    <source>
        <dbReference type="PDB" id="2BNM"/>
    </source>
</evidence>
<evidence type="ECO:0007829" key="25">
    <source>
        <dbReference type="PDB" id="2BNO"/>
    </source>
</evidence>
<proteinExistence type="evidence at protein level"/>
<gene>
    <name type="primary">hppE</name>
    <name type="synonym">fom4</name>
</gene>